<organism>
    <name type="scientific">Vibrio alginolyticus</name>
    <dbReference type="NCBI Taxonomy" id="663"/>
    <lineage>
        <taxon>Bacteria</taxon>
        <taxon>Pseudomonadati</taxon>
        <taxon>Pseudomonadota</taxon>
        <taxon>Gammaproteobacteria</taxon>
        <taxon>Vibrionales</taxon>
        <taxon>Vibrionaceae</taxon>
        <taxon>Vibrio</taxon>
    </lineage>
</organism>
<evidence type="ECO:0000250" key="1"/>
<evidence type="ECO:0000250" key="2">
    <source>
        <dbReference type="UniProtKB" id="P0AFB5"/>
    </source>
</evidence>
<evidence type="ECO:0000255" key="3">
    <source>
        <dbReference type="PROSITE-ProRule" id="PRU00107"/>
    </source>
</evidence>
<accession>P19906</accession>
<proteinExistence type="inferred from homology"/>
<comment type="function">
    <text evidence="2">Member of the two-component regulatory system NtrB/NtrC, which controls expression of the nitrogen-regulated (ntr) genes in response to nitrogen limitation. Under conditions of nitrogen limitation, NtrB autophosphorylates and transfers the phosphoryl group to NtrC. In the presence of nitrogen, acts as a phosphatase that dephosphorylates and inactivates NtrC.</text>
</comment>
<comment type="catalytic activity">
    <reaction evidence="2">
        <text>ATP + protein L-histidine = ADP + protein N-phospho-L-histidine.</text>
        <dbReference type="EC" id="2.7.13.3"/>
    </reaction>
</comment>
<comment type="subcellular location">
    <subcellularLocation>
        <location evidence="2">Cytoplasm</location>
    </subcellularLocation>
</comment>
<comment type="PTM">
    <text evidence="2">Autophosphorylated.</text>
</comment>
<sequence>MDTSLPSAILNNMVTATLILDDGLAIRYANPAAELLFSQSAKRIVEQSLSQLIQHASLDLALLTQPLQSGQSITDSDVTFVVDGRPLMLEVTVSPITWQKQLMLLVEMRKIDQQRRLSQELNQHAQQQAAKLLVRGLAHEIKNPLGGLRGAAQLLEKMLPDPSLTEYTHIIIEQADRLRALVDRLLGPQKPGKKTQENLHQILEKVRQLVELESQRSIVIERDYDPSLPEILMDADQIEQAMLNIVSNAAQILSHQEHGKITIRTRTVHQANIHGKRCKLAARVEITDNGPGIPPELQDTLFYPMVSGREGGTGLGLSISQNLIDQHNGKIDVESWPGHTTFTIYLPILR</sequence>
<feature type="chain" id="PRO_0000074827" description="Sensory histidine kinase/phosphatase NtrB">
    <location>
        <begin position="1"/>
        <end position="350"/>
    </location>
</feature>
<feature type="domain" description="PAS">
    <location>
        <begin position="4"/>
        <end position="67"/>
    </location>
</feature>
<feature type="domain" description="Histidine kinase" evidence="3">
    <location>
        <begin position="136"/>
        <end position="350"/>
    </location>
</feature>
<feature type="binding site" evidence="1">
    <location>
        <position position="330"/>
    </location>
    <ligand>
        <name>ATP</name>
        <dbReference type="ChEBI" id="CHEBI:30616"/>
    </ligand>
</feature>
<feature type="modified residue" description="Phosphohistidine; by autocatalysis" evidence="3">
    <location>
        <position position="139"/>
    </location>
</feature>
<keyword id="KW-0067">ATP-binding</keyword>
<keyword id="KW-0963">Cytoplasm</keyword>
<keyword id="KW-0378">Hydrolase</keyword>
<keyword id="KW-0418">Kinase</keyword>
<keyword id="KW-0535">Nitrogen fixation</keyword>
<keyword id="KW-0547">Nucleotide-binding</keyword>
<keyword id="KW-0597">Phosphoprotein</keyword>
<keyword id="KW-0808">Transferase</keyword>
<keyword id="KW-0902">Two-component regulatory system</keyword>
<reference key="1">
    <citation type="journal article" date="1989" name="Arch. Microbiol.">
        <title>Nucleotide sequence of the Vibrio alginolyticus glnA region.</title>
        <authorList>
            <person name="Maharaj R."/>
            <person name="Rumbak E."/>
            <person name="Jones W.A."/>
            <person name="Robb S.M."/>
            <person name="Robb F.T."/>
            <person name="Woods D.R."/>
        </authorList>
    </citation>
    <scope>NUCLEOTIDE SEQUENCE [GENOMIC DNA]</scope>
</reference>
<name>NTRB_VIBAL</name>
<protein>
    <recommendedName>
        <fullName evidence="2">Sensory histidine kinase/phosphatase NtrB</fullName>
        <ecNumber evidence="2">2.7.13.3</ecNumber>
        <ecNumber evidence="2">3.1.3.-</ecNumber>
    </recommendedName>
    <alternativeName>
        <fullName evidence="2">Nitrogen regulation protein NR(II)</fullName>
    </alternativeName>
    <alternativeName>
        <fullName evidence="2">Nitrogen regulator II</fullName>
        <shortName evidence="2">NRII</shortName>
    </alternativeName>
</protein>
<dbReference type="EC" id="2.7.13.3" evidence="2"/>
<dbReference type="EC" id="3.1.3.-" evidence="2"/>
<dbReference type="EMBL" id="L08499">
    <property type="protein sequence ID" value="AAA27524.1"/>
    <property type="status" value="ALT_TERM"/>
    <property type="molecule type" value="Genomic_DNA"/>
</dbReference>
<dbReference type="PIR" id="JL0114">
    <property type="entry name" value="JL0114"/>
</dbReference>
<dbReference type="SMR" id="P19906"/>
<dbReference type="STRING" id="663.BAU10_15720"/>
<dbReference type="eggNOG" id="COG3852">
    <property type="taxonomic scope" value="Bacteria"/>
</dbReference>
<dbReference type="BRENDA" id="2.7.13.3">
    <property type="organism ID" value="6624"/>
</dbReference>
<dbReference type="GO" id="GO:0005737">
    <property type="term" value="C:cytoplasm"/>
    <property type="evidence" value="ECO:0007669"/>
    <property type="project" value="UniProtKB-SubCell"/>
</dbReference>
<dbReference type="GO" id="GO:0005524">
    <property type="term" value="F:ATP binding"/>
    <property type="evidence" value="ECO:0007669"/>
    <property type="project" value="UniProtKB-KW"/>
</dbReference>
<dbReference type="GO" id="GO:0016787">
    <property type="term" value="F:hydrolase activity"/>
    <property type="evidence" value="ECO:0007669"/>
    <property type="project" value="UniProtKB-KW"/>
</dbReference>
<dbReference type="GO" id="GO:0000155">
    <property type="term" value="F:phosphorelay sensor kinase activity"/>
    <property type="evidence" value="ECO:0007669"/>
    <property type="project" value="InterPro"/>
</dbReference>
<dbReference type="GO" id="GO:0009399">
    <property type="term" value="P:nitrogen fixation"/>
    <property type="evidence" value="ECO:0007669"/>
    <property type="project" value="UniProtKB-KW"/>
</dbReference>
<dbReference type="GO" id="GO:0006355">
    <property type="term" value="P:regulation of DNA-templated transcription"/>
    <property type="evidence" value="ECO:0007669"/>
    <property type="project" value="InterPro"/>
</dbReference>
<dbReference type="CDD" id="cd00082">
    <property type="entry name" value="HisKA"/>
    <property type="match status" value="1"/>
</dbReference>
<dbReference type="CDD" id="cd00130">
    <property type="entry name" value="PAS"/>
    <property type="match status" value="1"/>
</dbReference>
<dbReference type="FunFam" id="1.10.287.130:FF:000005">
    <property type="entry name" value="Nitrogen regulation histidine kinase"/>
    <property type="match status" value="1"/>
</dbReference>
<dbReference type="FunFam" id="3.30.565.10:FF:000008">
    <property type="entry name" value="Nitrogen regulation histidine kinase"/>
    <property type="match status" value="1"/>
</dbReference>
<dbReference type="Gene3D" id="1.10.287.130">
    <property type="match status" value="1"/>
</dbReference>
<dbReference type="Gene3D" id="3.30.565.10">
    <property type="entry name" value="Histidine kinase-like ATPase, C-terminal domain"/>
    <property type="match status" value="1"/>
</dbReference>
<dbReference type="Gene3D" id="3.30.450.20">
    <property type="entry name" value="PAS domain"/>
    <property type="match status" value="1"/>
</dbReference>
<dbReference type="InterPro" id="IPR036890">
    <property type="entry name" value="HATPase_C_sf"/>
</dbReference>
<dbReference type="InterPro" id="IPR005467">
    <property type="entry name" value="His_kinase_dom"/>
</dbReference>
<dbReference type="InterPro" id="IPR003661">
    <property type="entry name" value="HisK_dim/P_dom"/>
</dbReference>
<dbReference type="InterPro" id="IPR036097">
    <property type="entry name" value="HisK_dim/P_sf"/>
</dbReference>
<dbReference type="InterPro" id="IPR000014">
    <property type="entry name" value="PAS"/>
</dbReference>
<dbReference type="InterPro" id="IPR035965">
    <property type="entry name" value="PAS-like_dom_sf"/>
</dbReference>
<dbReference type="InterPro" id="IPR013767">
    <property type="entry name" value="PAS_fold"/>
</dbReference>
<dbReference type="InterPro" id="IPR004358">
    <property type="entry name" value="Sig_transdc_His_kin-like_C"/>
</dbReference>
<dbReference type="NCBIfam" id="NF008293">
    <property type="entry name" value="PRK11073.1"/>
    <property type="match status" value="1"/>
</dbReference>
<dbReference type="NCBIfam" id="TIGR00229">
    <property type="entry name" value="sensory_box"/>
    <property type="match status" value="1"/>
</dbReference>
<dbReference type="PANTHER" id="PTHR43065">
    <property type="entry name" value="SENSOR HISTIDINE KINASE"/>
    <property type="match status" value="1"/>
</dbReference>
<dbReference type="PANTHER" id="PTHR43065:SF16">
    <property type="entry name" value="SENSORY HISTIDINE KINASE_PHOSPHATASE NTRB"/>
    <property type="match status" value="1"/>
</dbReference>
<dbReference type="Pfam" id="PF02518">
    <property type="entry name" value="HATPase_c"/>
    <property type="match status" value="1"/>
</dbReference>
<dbReference type="Pfam" id="PF00512">
    <property type="entry name" value="HisKA"/>
    <property type="match status" value="1"/>
</dbReference>
<dbReference type="Pfam" id="PF00989">
    <property type="entry name" value="PAS"/>
    <property type="match status" value="1"/>
</dbReference>
<dbReference type="PRINTS" id="PR00344">
    <property type="entry name" value="BCTRLSENSOR"/>
</dbReference>
<dbReference type="SMART" id="SM00387">
    <property type="entry name" value="HATPase_c"/>
    <property type="match status" value="1"/>
</dbReference>
<dbReference type="SMART" id="SM00388">
    <property type="entry name" value="HisKA"/>
    <property type="match status" value="1"/>
</dbReference>
<dbReference type="SMART" id="SM00091">
    <property type="entry name" value="PAS"/>
    <property type="match status" value="1"/>
</dbReference>
<dbReference type="SUPFAM" id="SSF55874">
    <property type="entry name" value="ATPase domain of HSP90 chaperone/DNA topoisomerase II/histidine kinase"/>
    <property type="match status" value="1"/>
</dbReference>
<dbReference type="SUPFAM" id="SSF47384">
    <property type="entry name" value="Homodimeric domain of signal transducing histidine kinase"/>
    <property type="match status" value="1"/>
</dbReference>
<dbReference type="SUPFAM" id="SSF55785">
    <property type="entry name" value="PYP-like sensor domain (PAS domain)"/>
    <property type="match status" value="1"/>
</dbReference>
<dbReference type="PROSITE" id="PS50109">
    <property type="entry name" value="HIS_KIN"/>
    <property type="match status" value="1"/>
</dbReference>
<gene>
    <name type="primary">ntrB</name>
</gene>